<proteinExistence type="inferred from homology"/>
<reference key="1">
    <citation type="journal article" date="2010" name="Environ. Microbiol.">
        <title>The genome of Syntrophomonas wolfei: new insights into syntrophic metabolism and biohydrogen production.</title>
        <authorList>
            <person name="Sieber J.R."/>
            <person name="Sims D.R."/>
            <person name="Han C."/>
            <person name="Kim E."/>
            <person name="Lykidis A."/>
            <person name="Lapidus A.L."/>
            <person name="McDonnald E."/>
            <person name="Rohlin L."/>
            <person name="Culley D.E."/>
            <person name="Gunsalus R."/>
            <person name="McInerney M.J."/>
        </authorList>
    </citation>
    <scope>NUCLEOTIDE SEQUENCE [LARGE SCALE GENOMIC DNA]</scope>
    <source>
        <strain>DSM 2245B / Goettingen</strain>
    </source>
</reference>
<protein>
    <recommendedName>
        <fullName evidence="1">Leucine--tRNA ligase</fullName>
        <ecNumber evidence="1">6.1.1.4</ecNumber>
    </recommendedName>
    <alternativeName>
        <fullName evidence="1">Leucyl-tRNA synthetase</fullName>
        <shortName evidence="1">LeuRS</shortName>
    </alternativeName>
</protein>
<gene>
    <name evidence="1" type="primary">leuS</name>
    <name type="ordered locus">Swol_1599</name>
</gene>
<organism>
    <name type="scientific">Syntrophomonas wolfei subsp. wolfei (strain DSM 2245B / Goettingen)</name>
    <dbReference type="NCBI Taxonomy" id="335541"/>
    <lineage>
        <taxon>Bacteria</taxon>
        <taxon>Bacillati</taxon>
        <taxon>Bacillota</taxon>
        <taxon>Clostridia</taxon>
        <taxon>Eubacteriales</taxon>
        <taxon>Syntrophomonadaceae</taxon>
        <taxon>Syntrophomonas</taxon>
    </lineage>
</organism>
<accession>Q0AWK4</accession>
<dbReference type="EC" id="6.1.1.4" evidence="1"/>
<dbReference type="EMBL" id="CP000448">
    <property type="protein sequence ID" value="ABI68900.1"/>
    <property type="molecule type" value="Genomic_DNA"/>
</dbReference>
<dbReference type="RefSeq" id="WP_011640998.1">
    <property type="nucleotide sequence ID" value="NC_008346.1"/>
</dbReference>
<dbReference type="SMR" id="Q0AWK4"/>
<dbReference type="STRING" id="335541.Swol_1599"/>
<dbReference type="KEGG" id="swo:Swol_1599"/>
<dbReference type="eggNOG" id="COG0495">
    <property type="taxonomic scope" value="Bacteria"/>
</dbReference>
<dbReference type="HOGENOM" id="CLU_004427_0_0_9"/>
<dbReference type="OrthoDB" id="9810365at2"/>
<dbReference type="Proteomes" id="UP000001968">
    <property type="component" value="Chromosome"/>
</dbReference>
<dbReference type="GO" id="GO:0005829">
    <property type="term" value="C:cytosol"/>
    <property type="evidence" value="ECO:0007669"/>
    <property type="project" value="TreeGrafter"/>
</dbReference>
<dbReference type="GO" id="GO:0002161">
    <property type="term" value="F:aminoacyl-tRNA deacylase activity"/>
    <property type="evidence" value="ECO:0007669"/>
    <property type="project" value="InterPro"/>
</dbReference>
<dbReference type="GO" id="GO:0005524">
    <property type="term" value="F:ATP binding"/>
    <property type="evidence" value="ECO:0007669"/>
    <property type="project" value="UniProtKB-UniRule"/>
</dbReference>
<dbReference type="GO" id="GO:0004823">
    <property type="term" value="F:leucine-tRNA ligase activity"/>
    <property type="evidence" value="ECO:0007669"/>
    <property type="project" value="UniProtKB-UniRule"/>
</dbReference>
<dbReference type="GO" id="GO:0006429">
    <property type="term" value="P:leucyl-tRNA aminoacylation"/>
    <property type="evidence" value="ECO:0007669"/>
    <property type="project" value="UniProtKB-UniRule"/>
</dbReference>
<dbReference type="CDD" id="cd07958">
    <property type="entry name" value="Anticodon_Ia_Leu_BEm"/>
    <property type="match status" value="1"/>
</dbReference>
<dbReference type="CDD" id="cd00812">
    <property type="entry name" value="LeuRS_core"/>
    <property type="match status" value="1"/>
</dbReference>
<dbReference type="FunFam" id="3.40.50.620:FF:000003">
    <property type="entry name" value="Leucine--tRNA ligase"/>
    <property type="match status" value="1"/>
</dbReference>
<dbReference type="FunFam" id="3.40.50.620:FF:000056">
    <property type="entry name" value="Leucine--tRNA ligase"/>
    <property type="match status" value="1"/>
</dbReference>
<dbReference type="FunFam" id="1.10.730.10:FF:000011">
    <property type="entry name" value="Leucine--tRNA ligase chloroplastic/mitochondrial"/>
    <property type="match status" value="1"/>
</dbReference>
<dbReference type="Gene3D" id="3.10.20.590">
    <property type="match status" value="1"/>
</dbReference>
<dbReference type="Gene3D" id="3.40.50.620">
    <property type="entry name" value="HUPs"/>
    <property type="match status" value="2"/>
</dbReference>
<dbReference type="Gene3D" id="1.10.730.10">
    <property type="entry name" value="Isoleucyl-tRNA Synthetase, Domain 1"/>
    <property type="match status" value="1"/>
</dbReference>
<dbReference type="HAMAP" id="MF_00049_B">
    <property type="entry name" value="Leu_tRNA_synth_B"/>
    <property type="match status" value="1"/>
</dbReference>
<dbReference type="InterPro" id="IPR001412">
    <property type="entry name" value="aa-tRNA-synth_I_CS"/>
</dbReference>
<dbReference type="InterPro" id="IPR002300">
    <property type="entry name" value="aa-tRNA-synth_Ia"/>
</dbReference>
<dbReference type="InterPro" id="IPR002302">
    <property type="entry name" value="Leu-tRNA-ligase"/>
</dbReference>
<dbReference type="InterPro" id="IPR025709">
    <property type="entry name" value="Leu_tRNA-synth_edit"/>
</dbReference>
<dbReference type="InterPro" id="IPR013155">
    <property type="entry name" value="M/V/L/I-tRNA-synth_anticd-bd"/>
</dbReference>
<dbReference type="InterPro" id="IPR015413">
    <property type="entry name" value="Methionyl/Leucyl_tRNA_Synth"/>
</dbReference>
<dbReference type="InterPro" id="IPR014729">
    <property type="entry name" value="Rossmann-like_a/b/a_fold"/>
</dbReference>
<dbReference type="InterPro" id="IPR009080">
    <property type="entry name" value="tRNAsynth_Ia_anticodon-bd"/>
</dbReference>
<dbReference type="InterPro" id="IPR009008">
    <property type="entry name" value="Val/Leu/Ile-tRNA-synth_edit"/>
</dbReference>
<dbReference type="NCBIfam" id="TIGR00396">
    <property type="entry name" value="leuS_bact"/>
    <property type="match status" value="1"/>
</dbReference>
<dbReference type="PANTHER" id="PTHR43740:SF2">
    <property type="entry name" value="LEUCINE--TRNA LIGASE, MITOCHONDRIAL"/>
    <property type="match status" value="1"/>
</dbReference>
<dbReference type="PANTHER" id="PTHR43740">
    <property type="entry name" value="LEUCYL-TRNA SYNTHETASE"/>
    <property type="match status" value="1"/>
</dbReference>
<dbReference type="Pfam" id="PF08264">
    <property type="entry name" value="Anticodon_1"/>
    <property type="match status" value="1"/>
</dbReference>
<dbReference type="Pfam" id="PF00133">
    <property type="entry name" value="tRNA-synt_1"/>
    <property type="match status" value="1"/>
</dbReference>
<dbReference type="Pfam" id="PF13603">
    <property type="entry name" value="tRNA-synt_1_2"/>
    <property type="match status" value="1"/>
</dbReference>
<dbReference type="Pfam" id="PF09334">
    <property type="entry name" value="tRNA-synt_1g"/>
    <property type="match status" value="1"/>
</dbReference>
<dbReference type="PRINTS" id="PR00985">
    <property type="entry name" value="TRNASYNTHLEU"/>
</dbReference>
<dbReference type="SUPFAM" id="SSF47323">
    <property type="entry name" value="Anticodon-binding domain of a subclass of class I aminoacyl-tRNA synthetases"/>
    <property type="match status" value="1"/>
</dbReference>
<dbReference type="SUPFAM" id="SSF52374">
    <property type="entry name" value="Nucleotidylyl transferase"/>
    <property type="match status" value="1"/>
</dbReference>
<dbReference type="SUPFAM" id="SSF50677">
    <property type="entry name" value="ValRS/IleRS/LeuRS editing domain"/>
    <property type="match status" value="1"/>
</dbReference>
<dbReference type="PROSITE" id="PS00178">
    <property type="entry name" value="AA_TRNA_LIGASE_I"/>
    <property type="match status" value="1"/>
</dbReference>
<sequence>MDRKYDFKSIEAKWQAYWENKQLFKVEEDPEKPKYYNLEMFPYPSGHLHMGHVRNYAIGDVVARFKSMNGFNVLHPMGWDAFGLPAENAAIKNAIHPATWTYSNIENMKRQLKTMGISYDWDRELATCKPDYYKFTQWMFLKLYENKLAYKKKSAVNWCPSCQTVLANEQVVDGACERCEAVIEKKQLEQWFFKITDYAQRLLDDLALLPGWPEKVKTMQKNWIGRSEGCEFSLHIEDSDEVLTVFTTRPDTVFGVTYMVLAPEHPLVEKICHPEQEKEVKAFVNKMKYLNEMARTSTEAEKEGVFTGAYAINPMDGSRIPIWIANYVLMDYGTGAIMAVPAHDQRDFEFARKYDIPVKVVIKGEDTPLDGNLLQESYPGDGHMVNSGNFDGLTVEEGQKAVIKFMEEKGIGQGTVNYRLRDWLISRQRYWGAPIPIVYCPECGPVAVPEEELPLYLPEDIDFKPYAESPLKHLERFYKTTCPSCGKEALRETDTMDTFVCSSWYFDRFCSPHESKQPFSREAVDYWMPVDQYIGGVEHAILHLMYARFFTKFLFDINVLSCQEPFTRLLTQGMVLKDNAKMSKSKGNVVSPEEIIDTYGADTARLFILFASPPERDLEWSEQGVEGAFRFLNRVWRLVSELAEGIKDLPAAEHFPELDSEAKNLRFKTHATIKKVTEDIGERFNFNTAISAIMELSNTLGAYKGIKKPNWPVVKEAVDNLLILLSPFSPHICEELWQLTGHAESIYLQKWPKYDPEALLQEEIEIVLQISGKVRDRIMVPVDAGREELEKIALDNPKIRELTRGKEIVKLIVVPGKLVNVVAK</sequence>
<evidence type="ECO:0000255" key="1">
    <source>
        <dbReference type="HAMAP-Rule" id="MF_00049"/>
    </source>
</evidence>
<comment type="catalytic activity">
    <reaction evidence="1">
        <text>tRNA(Leu) + L-leucine + ATP = L-leucyl-tRNA(Leu) + AMP + diphosphate</text>
        <dbReference type="Rhea" id="RHEA:11688"/>
        <dbReference type="Rhea" id="RHEA-COMP:9613"/>
        <dbReference type="Rhea" id="RHEA-COMP:9622"/>
        <dbReference type="ChEBI" id="CHEBI:30616"/>
        <dbReference type="ChEBI" id="CHEBI:33019"/>
        <dbReference type="ChEBI" id="CHEBI:57427"/>
        <dbReference type="ChEBI" id="CHEBI:78442"/>
        <dbReference type="ChEBI" id="CHEBI:78494"/>
        <dbReference type="ChEBI" id="CHEBI:456215"/>
        <dbReference type="EC" id="6.1.1.4"/>
    </reaction>
</comment>
<comment type="subcellular location">
    <subcellularLocation>
        <location evidence="1">Cytoplasm</location>
    </subcellularLocation>
</comment>
<comment type="similarity">
    <text evidence="1">Belongs to the class-I aminoacyl-tRNA synthetase family.</text>
</comment>
<feature type="chain" id="PRO_0000334833" description="Leucine--tRNA ligase">
    <location>
        <begin position="1"/>
        <end position="824"/>
    </location>
</feature>
<feature type="short sequence motif" description="'HIGH' region">
    <location>
        <begin position="42"/>
        <end position="52"/>
    </location>
</feature>
<feature type="short sequence motif" description="'KMSKS' region">
    <location>
        <begin position="581"/>
        <end position="585"/>
    </location>
</feature>
<feature type="binding site" evidence="1">
    <location>
        <position position="584"/>
    </location>
    <ligand>
        <name>ATP</name>
        <dbReference type="ChEBI" id="CHEBI:30616"/>
    </ligand>
</feature>
<keyword id="KW-0030">Aminoacyl-tRNA synthetase</keyword>
<keyword id="KW-0067">ATP-binding</keyword>
<keyword id="KW-0963">Cytoplasm</keyword>
<keyword id="KW-0436">Ligase</keyword>
<keyword id="KW-0547">Nucleotide-binding</keyword>
<keyword id="KW-0648">Protein biosynthesis</keyword>
<keyword id="KW-1185">Reference proteome</keyword>
<name>SYL_SYNWW</name>